<name>NUSB_CLOBM</name>
<proteinExistence type="inferred from homology"/>
<accession>B1KT54</accession>
<feature type="chain" id="PRO_1000092544" description="Transcription antitermination protein NusB">
    <location>
        <begin position="1"/>
        <end position="141"/>
    </location>
</feature>
<comment type="function">
    <text evidence="1">Involved in transcription antitermination. Required for transcription of ribosomal RNA (rRNA) genes. Binds specifically to the boxA antiterminator sequence of the ribosomal RNA (rrn) operons.</text>
</comment>
<comment type="similarity">
    <text evidence="1">Belongs to the NusB family.</text>
</comment>
<reference key="1">
    <citation type="journal article" date="2007" name="PLoS ONE">
        <title>Analysis of the neurotoxin complex genes in Clostridium botulinum A1-A4 and B1 strains: BoNT/A3, /Ba4 and /B1 clusters are located within plasmids.</title>
        <authorList>
            <person name="Smith T.J."/>
            <person name="Hill K.K."/>
            <person name="Foley B.T."/>
            <person name="Detter J.C."/>
            <person name="Munk A.C."/>
            <person name="Bruce D.C."/>
            <person name="Doggett N.A."/>
            <person name="Smith L.A."/>
            <person name="Marks J.D."/>
            <person name="Xie G."/>
            <person name="Brettin T.S."/>
        </authorList>
    </citation>
    <scope>NUCLEOTIDE SEQUENCE [LARGE SCALE GENOMIC DNA]</scope>
    <source>
        <strain>Loch Maree / Type A3</strain>
    </source>
</reference>
<dbReference type="EMBL" id="CP000962">
    <property type="protein sequence ID" value="ACA55571.1"/>
    <property type="molecule type" value="Genomic_DNA"/>
</dbReference>
<dbReference type="RefSeq" id="WP_012343535.1">
    <property type="nucleotide sequence ID" value="NC_010520.1"/>
</dbReference>
<dbReference type="SMR" id="B1KT54"/>
<dbReference type="KEGG" id="cbl:CLK_1276"/>
<dbReference type="HOGENOM" id="CLU_087843_3_1_9"/>
<dbReference type="GO" id="GO:0005829">
    <property type="term" value="C:cytosol"/>
    <property type="evidence" value="ECO:0007669"/>
    <property type="project" value="TreeGrafter"/>
</dbReference>
<dbReference type="GO" id="GO:0003723">
    <property type="term" value="F:RNA binding"/>
    <property type="evidence" value="ECO:0007669"/>
    <property type="project" value="UniProtKB-UniRule"/>
</dbReference>
<dbReference type="GO" id="GO:0006353">
    <property type="term" value="P:DNA-templated transcription termination"/>
    <property type="evidence" value="ECO:0007669"/>
    <property type="project" value="UniProtKB-UniRule"/>
</dbReference>
<dbReference type="GO" id="GO:0031564">
    <property type="term" value="P:transcription antitermination"/>
    <property type="evidence" value="ECO:0007669"/>
    <property type="project" value="UniProtKB-KW"/>
</dbReference>
<dbReference type="FunFam" id="1.10.940.10:FF:000003">
    <property type="entry name" value="Transcription antitermination factor NusB"/>
    <property type="match status" value="1"/>
</dbReference>
<dbReference type="Gene3D" id="1.10.940.10">
    <property type="entry name" value="NusB-like"/>
    <property type="match status" value="1"/>
</dbReference>
<dbReference type="HAMAP" id="MF_00073">
    <property type="entry name" value="NusB"/>
    <property type="match status" value="1"/>
</dbReference>
<dbReference type="InterPro" id="IPR035926">
    <property type="entry name" value="NusB-like_sf"/>
</dbReference>
<dbReference type="InterPro" id="IPR011605">
    <property type="entry name" value="NusB_fam"/>
</dbReference>
<dbReference type="InterPro" id="IPR006027">
    <property type="entry name" value="NusB_RsmB_TIM44"/>
</dbReference>
<dbReference type="NCBIfam" id="TIGR01951">
    <property type="entry name" value="nusB"/>
    <property type="match status" value="1"/>
</dbReference>
<dbReference type="PANTHER" id="PTHR11078:SF3">
    <property type="entry name" value="ANTITERMINATION NUSB DOMAIN-CONTAINING PROTEIN"/>
    <property type="match status" value="1"/>
</dbReference>
<dbReference type="PANTHER" id="PTHR11078">
    <property type="entry name" value="N UTILIZATION SUBSTANCE PROTEIN B-RELATED"/>
    <property type="match status" value="1"/>
</dbReference>
<dbReference type="Pfam" id="PF01029">
    <property type="entry name" value="NusB"/>
    <property type="match status" value="1"/>
</dbReference>
<dbReference type="SUPFAM" id="SSF48013">
    <property type="entry name" value="NusB-like"/>
    <property type="match status" value="1"/>
</dbReference>
<keyword id="KW-0694">RNA-binding</keyword>
<keyword id="KW-0804">Transcription</keyword>
<keyword id="KW-0889">Transcription antitermination</keyword>
<keyword id="KW-0805">Transcription regulation</keyword>
<protein>
    <recommendedName>
        <fullName evidence="1">Transcription antitermination protein NusB</fullName>
    </recommendedName>
    <alternativeName>
        <fullName evidence="1">Antitermination factor NusB</fullName>
    </alternativeName>
</protein>
<gene>
    <name evidence="1" type="primary">nusB</name>
    <name type="ordered locus">CLK_1276</name>
</gene>
<sequence length="141" mass="16424">MNRRKSREVAMRLLFQTTLNGENLEEALENLKDVRESEDKEKDYESVDLKDVDIDYVKRIIKGIEKNKEEIDGKIKGNLKNWKIERLSKVDLSILRLCTYELKFEEDIPKRVSVNEAIELAKKYSGEKSATFINGVLGKMI</sequence>
<evidence type="ECO:0000255" key="1">
    <source>
        <dbReference type="HAMAP-Rule" id="MF_00073"/>
    </source>
</evidence>
<organism>
    <name type="scientific">Clostridium botulinum (strain Loch Maree / Type A3)</name>
    <dbReference type="NCBI Taxonomy" id="498214"/>
    <lineage>
        <taxon>Bacteria</taxon>
        <taxon>Bacillati</taxon>
        <taxon>Bacillota</taxon>
        <taxon>Clostridia</taxon>
        <taxon>Eubacteriales</taxon>
        <taxon>Clostridiaceae</taxon>
        <taxon>Clostridium</taxon>
    </lineage>
</organism>